<reference key="1">
    <citation type="journal article" date="2001" name="Nature">
        <title>Massive gene decay in the leprosy bacillus.</title>
        <authorList>
            <person name="Cole S.T."/>
            <person name="Eiglmeier K."/>
            <person name="Parkhill J."/>
            <person name="James K.D."/>
            <person name="Thomson N.R."/>
            <person name="Wheeler P.R."/>
            <person name="Honore N."/>
            <person name="Garnier T."/>
            <person name="Churcher C.M."/>
            <person name="Harris D.E."/>
            <person name="Mungall K.L."/>
            <person name="Basham D."/>
            <person name="Brown D."/>
            <person name="Chillingworth T."/>
            <person name="Connor R."/>
            <person name="Davies R.M."/>
            <person name="Devlin K."/>
            <person name="Duthoy S."/>
            <person name="Feltwell T."/>
            <person name="Fraser A."/>
            <person name="Hamlin N."/>
            <person name="Holroyd S."/>
            <person name="Hornsby T."/>
            <person name="Jagels K."/>
            <person name="Lacroix C."/>
            <person name="Maclean J."/>
            <person name="Moule S."/>
            <person name="Murphy L.D."/>
            <person name="Oliver K."/>
            <person name="Quail M.A."/>
            <person name="Rajandream M.A."/>
            <person name="Rutherford K.M."/>
            <person name="Rutter S."/>
            <person name="Seeger K."/>
            <person name="Simon S."/>
            <person name="Simmonds M."/>
            <person name="Skelton J."/>
            <person name="Squares R."/>
            <person name="Squares S."/>
            <person name="Stevens K."/>
            <person name="Taylor K."/>
            <person name="Whitehead S."/>
            <person name="Woodward J.R."/>
            <person name="Barrell B.G."/>
        </authorList>
    </citation>
    <scope>NUCLEOTIDE SEQUENCE [LARGE SCALE GENOMIC DNA]</scope>
    <source>
        <strain>TN</strain>
    </source>
</reference>
<comment type="function">
    <text evidence="1">Involved in transcription antitermination. Required for transcription of ribosomal RNA (rRNA) genes. Binds specifically to the boxA antiterminator sequence of the ribosomal RNA (rrn) operons.</text>
</comment>
<comment type="similarity">
    <text evidence="1 3">Belongs to the NusB family.</text>
</comment>
<dbReference type="EMBL" id="AL583918">
    <property type="protein sequence ID" value="CAC30031.1"/>
    <property type="molecule type" value="Genomic_DNA"/>
</dbReference>
<dbReference type="PIR" id="C86974">
    <property type="entry name" value="C86974"/>
</dbReference>
<dbReference type="RefSeq" id="NP_301448.1">
    <property type="nucleotide sequence ID" value="NC_002677.1"/>
</dbReference>
<dbReference type="SMR" id="Q9CCR9"/>
<dbReference type="STRING" id="272631.gene:17574344"/>
<dbReference type="KEGG" id="mle:ML0523"/>
<dbReference type="PATRIC" id="fig|272631.5.peg.912"/>
<dbReference type="Leproma" id="ML0523"/>
<dbReference type="eggNOG" id="COG0781">
    <property type="taxonomic scope" value="Bacteria"/>
</dbReference>
<dbReference type="HOGENOM" id="CLU_087843_2_0_11"/>
<dbReference type="OrthoDB" id="3528057at2"/>
<dbReference type="Proteomes" id="UP000000806">
    <property type="component" value="Chromosome"/>
</dbReference>
<dbReference type="GO" id="GO:0005829">
    <property type="term" value="C:cytosol"/>
    <property type="evidence" value="ECO:0007669"/>
    <property type="project" value="TreeGrafter"/>
</dbReference>
<dbReference type="GO" id="GO:0003723">
    <property type="term" value="F:RNA binding"/>
    <property type="evidence" value="ECO:0007669"/>
    <property type="project" value="UniProtKB-UniRule"/>
</dbReference>
<dbReference type="GO" id="GO:0006353">
    <property type="term" value="P:DNA-templated transcription termination"/>
    <property type="evidence" value="ECO:0007669"/>
    <property type="project" value="UniProtKB-UniRule"/>
</dbReference>
<dbReference type="GO" id="GO:0031564">
    <property type="term" value="P:transcription antitermination"/>
    <property type="evidence" value="ECO:0007669"/>
    <property type="project" value="UniProtKB-KW"/>
</dbReference>
<dbReference type="CDD" id="cd00619">
    <property type="entry name" value="Terminator_NusB"/>
    <property type="match status" value="1"/>
</dbReference>
<dbReference type="Gene3D" id="1.10.940.10">
    <property type="entry name" value="NusB-like"/>
    <property type="match status" value="1"/>
</dbReference>
<dbReference type="HAMAP" id="MF_00073">
    <property type="entry name" value="NusB"/>
    <property type="match status" value="1"/>
</dbReference>
<dbReference type="InterPro" id="IPR035926">
    <property type="entry name" value="NusB-like_sf"/>
</dbReference>
<dbReference type="InterPro" id="IPR011605">
    <property type="entry name" value="NusB_fam"/>
</dbReference>
<dbReference type="InterPro" id="IPR006027">
    <property type="entry name" value="NusB_RsmB_TIM44"/>
</dbReference>
<dbReference type="NCBIfam" id="TIGR01951">
    <property type="entry name" value="nusB"/>
    <property type="match status" value="1"/>
</dbReference>
<dbReference type="PANTHER" id="PTHR11078:SF3">
    <property type="entry name" value="ANTITERMINATION NUSB DOMAIN-CONTAINING PROTEIN"/>
    <property type="match status" value="1"/>
</dbReference>
<dbReference type="PANTHER" id="PTHR11078">
    <property type="entry name" value="N UTILIZATION SUBSTANCE PROTEIN B-RELATED"/>
    <property type="match status" value="1"/>
</dbReference>
<dbReference type="Pfam" id="PF01029">
    <property type="entry name" value="NusB"/>
    <property type="match status" value="1"/>
</dbReference>
<dbReference type="SUPFAM" id="SSF48013">
    <property type="entry name" value="NusB-like"/>
    <property type="match status" value="1"/>
</dbReference>
<gene>
    <name evidence="1" type="primary">nusB</name>
    <name type="ordered locus">ML0523</name>
</gene>
<accession>Q9CCR9</accession>
<name>NUSB_MYCLE</name>
<organism>
    <name type="scientific">Mycobacterium leprae (strain TN)</name>
    <dbReference type="NCBI Taxonomy" id="272631"/>
    <lineage>
        <taxon>Bacteria</taxon>
        <taxon>Bacillati</taxon>
        <taxon>Actinomycetota</taxon>
        <taxon>Actinomycetes</taxon>
        <taxon>Mycobacteriales</taxon>
        <taxon>Mycobacteriaceae</taxon>
        <taxon>Mycobacterium</taxon>
    </lineage>
</organism>
<keyword id="KW-1185">Reference proteome</keyword>
<keyword id="KW-0694">RNA-binding</keyword>
<keyword id="KW-0804">Transcription</keyword>
<keyword id="KW-0889">Transcription antitermination</keyword>
<keyword id="KW-0805">Transcription regulation</keyword>
<proteinExistence type="inferred from homology"/>
<evidence type="ECO:0000255" key="1">
    <source>
        <dbReference type="HAMAP-Rule" id="MF_00073"/>
    </source>
</evidence>
<evidence type="ECO:0000256" key="2">
    <source>
        <dbReference type="SAM" id="MobiDB-lite"/>
    </source>
</evidence>
<evidence type="ECO:0000305" key="3"/>
<protein>
    <recommendedName>
        <fullName evidence="1">Transcription antitermination protein NusB</fullName>
    </recommendedName>
    <alternativeName>
        <fullName evidence="1">Antitermination factor NusB</fullName>
    </alternativeName>
</protein>
<sequence length="190" mass="20519">MSNPVKGRHQARKRAVDLLFEAEARDLSPLEIIEVRSALAKSKLDVAPLHPYTVVVAQGVSEHTARIDELIISHLQGWKLDRLPAVDRAILRVSIWELLYADDVPEPVAVDEAVELAKELSTDDSPGFVNGLLGKVMLVTPQIRAAAQAVQQAVRMAAGTSEDHVPQREPAAGQLGQDDSNGGQVAAVCR</sequence>
<feature type="chain" id="PRO_0000176556" description="Transcription antitermination protein NusB">
    <location>
        <begin position="1"/>
        <end position="190"/>
    </location>
</feature>
<feature type="region of interest" description="Disordered" evidence="2">
    <location>
        <begin position="158"/>
        <end position="190"/>
    </location>
</feature>